<sequence>MRRSLAPSQRGGQRLSSRNDFTPPLLKKNKRACQQDLEQERLRQSALRDATNTSDLPLPIRFTANTEYEMAIAKVLARKFKVPIDNYVPDYGGNRTLGVRRRIVRRPLHDPLACNALVLYHAPNYTDHERMSMEPSSVLVHVVVDPLLSNILRPHQREGVRFMYECVEGKRGNFNGCIMADEMGLGKTLQCVALVWTLLKQSAECKPTINKCIIVSPSSLVKNWEKEFTKWLHGRMHCLAMEGGSKENTVRALEQFSMNASTRLGTPVLLISYETFRIYAEILCKYEVGMVICDEGHRLKNSDNLTYQALMGLKTKRRVLLSGTPIQNDLTEYFSLVNFVNPEMLGTAADFKRNFENCILRGQNADSTDKERDRALEKTQELIKLVDQCIIRRTNQILTKYLPVKFEMVICAKLTPIQLQLYTNFLKSDQVRRSLADCKEKASLTALADITTLKKLCSHPNLICEKIAAEEKGFENSQNILPINYNPKGEINPELSGKFKLLDFMLAAIRAHGNDKVVLISNYTQTLDLFEQLARKRKYGFVRLDGTMSIKKRSKVVDRFNDPESDCFLFMLSSKAGGCGLNLIGANRLFMFDPDWNPANDEQAMARVWRDGQKKPCYIYRLVASGSIEEKILQRQTHKKSLSSTIIDNNESAEKHFTRDDLKDLFSFDPDILSDTHDKLKCKRCVQNVQMKPPPDDTDCTSHLSQWYHCSNNRGLPDNILAQAWTDSKCVSFVFHHRSQSQKIETTPATETSVEAKPEPERRKRPAMPLSDDSADEDFQGF</sequence>
<dbReference type="EC" id="3.6.4.-"/>
<dbReference type="EMBL" id="CH379061">
    <property type="protein sequence ID" value="EAL33203.2"/>
    <property type="molecule type" value="Genomic_DNA"/>
</dbReference>
<dbReference type="RefSeq" id="XP_001356143.2">
    <property type="nucleotide sequence ID" value="XM_001356107.3"/>
</dbReference>
<dbReference type="SMR" id="Q29KH2"/>
<dbReference type="FunCoup" id="Q29KH2">
    <property type="interactions" value="1256"/>
</dbReference>
<dbReference type="STRING" id="46245.Q29KH2"/>
<dbReference type="EnsemblMetazoa" id="FBtr0289457">
    <property type="protein sequence ID" value="FBpp0287895"/>
    <property type="gene ID" value="FBgn0077662"/>
</dbReference>
<dbReference type="GeneID" id="4816519"/>
<dbReference type="KEGG" id="dpo:4816519"/>
<dbReference type="CTD" id="33507"/>
<dbReference type="eggNOG" id="KOG0390">
    <property type="taxonomic scope" value="Eukaryota"/>
</dbReference>
<dbReference type="HOGENOM" id="CLU_000315_10_5_1"/>
<dbReference type="InParanoid" id="Q29KH2"/>
<dbReference type="OMA" id="YTEHERM"/>
<dbReference type="ChiTaRS" id="okr">
    <property type="organism name" value="fly"/>
</dbReference>
<dbReference type="Proteomes" id="UP000001819">
    <property type="component" value="Chromosome 4"/>
</dbReference>
<dbReference type="Bgee" id="FBgn0077662">
    <property type="expression patterns" value="Expressed in female reproductive system and 2 other cell types or tissues"/>
</dbReference>
<dbReference type="GO" id="GO:0005634">
    <property type="term" value="C:nucleus"/>
    <property type="evidence" value="ECO:0000250"/>
    <property type="project" value="UniProtKB"/>
</dbReference>
<dbReference type="GO" id="GO:0005524">
    <property type="term" value="F:ATP binding"/>
    <property type="evidence" value="ECO:0007669"/>
    <property type="project" value="UniProtKB-KW"/>
</dbReference>
<dbReference type="GO" id="GO:0003677">
    <property type="term" value="F:DNA binding"/>
    <property type="evidence" value="ECO:0007669"/>
    <property type="project" value="UniProtKB-KW"/>
</dbReference>
<dbReference type="GO" id="GO:0015616">
    <property type="term" value="F:DNA translocase activity"/>
    <property type="evidence" value="ECO:0007669"/>
    <property type="project" value="TreeGrafter"/>
</dbReference>
<dbReference type="GO" id="GO:0004386">
    <property type="term" value="F:helicase activity"/>
    <property type="evidence" value="ECO:0007669"/>
    <property type="project" value="UniProtKB-KW"/>
</dbReference>
<dbReference type="GO" id="GO:0016817">
    <property type="term" value="F:hydrolase activity, acting on acid anhydrides"/>
    <property type="evidence" value="ECO:0007669"/>
    <property type="project" value="InterPro"/>
</dbReference>
<dbReference type="GO" id="GO:0051301">
    <property type="term" value="P:cell division"/>
    <property type="evidence" value="ECO:0007669"/>
    <property type="project" value="UniProtKB-KW"/>
</dbReference>
<dbReference type="GO" id="GO:0006338">
    <property type="term" value="P:chromatin remodeling"/>
    <property type="evidence" value="ECO:0000250"/>
    <property type="project" value="UniProtKB"/>
</dbReference>
<dbReference type="GO" id="GO:0043150">
    <property type="term" value="P:DNA synthesis involved in double-strand break repair via homologous recombination"/>
    <property type="evidence" value="ECO:0000250"/>
    <property type="project" value="UniProtKB"/>
</dbReference>
<dbReference type="GO" id="GO:0000724">
    <property type="term" value="P:double-strand break repair via homologous recombination"/>
    <property type="evidence" value="ECO:0000250"/>
    <property type="project" value="UniProtKB"/>
</dbReference>
<dbReference type="GO" id="GO:0045003">
    <property type="term" value="P:double-strand break repair via synthesis-dependent strand annealing"/>
    <property type="evidence" value="ECO:0007669"/>
    <property type="project" value="TreeGrafter"/>
</dbReference>
<dbReference type="GO" id="GO:0000711">
    <property type="term" value="P:meiotic DNA repair synthesis"/>
    <property type="evidence" value="ECO:0000250"/>
    <property type="project" value="UniProtKB"/>
</dbReference>
<dbReference type="GO" id="GO:0007131">
    <property type="term" value="P:reciprocal meiotic recombination"/>
    <property type="evidence" value="ECO:0007669"/>
    <property type="project" value="TreeGrafter"/>
</dbReference>
<dbReference type="GO" id="GO:0010212">
    <property type="term" value="P:response to ionizing radiation"/>
    <property type="evidence" value="ECO:0000250"/>
    <property type="project" value="UniProtKB"/>
</dbReference>
<dbReference type="CDD" id="cd18067">
    <property type="entry name" value="DEXHc_RAD54A"/>
    <property type="match status" value="1"/>
</dbReference>
<dbReference type="CDD" id="cd18793">
    <property type="entry name" value="SF2_C_SNF"/>
    <property type="match status" value="1"/>
</dbReference>
<dbReference type="FunFam" id="3.40.50.10810:FF:000010">
    <property type="entry name" value="DNA repair and recombination protein RAD54-like"/>
    <property type="match status" value="1"/>
</dbReference>
<dbReference type="FunFam" id="3.40.50.300:FF:000332">
    <property type="entry name" value="DNA repair and recombination protein RAD54-like"/>
    <property type="match status" value="1"/>
</dbReference>
<dbReference type="Gene3D" id="3.40.50.300">
    <property type="entry name" value="P-loop containing nucleotide triphosphate hydrolases"/>
    <property type="match status" value="1"/>
</dbReference>
<dbReference type="Gene3D" id="1.20.120.850">
    <property type="entry name" value="SWI2/SNF2 ATPases, N-terminal domain"/>
    <property type="match status" value="1"/>
</dbReference>
<dbReference type="Gene3D" id="3.40.50.10810">
    <property type="entry name" value="Tandem AAA-ATPase domain"/>
    <property type="match status" value="1"/>
</dbReference>
<dbReference type="InterPro" id="IPR014001">
    <property type="entry name" value="Helicase_ATP-bd"/>
</dbReference>
<dbReference type="InterPro" id="IPR001650">
    <property type="entry name" value="Helicase_C-like"/>
</dbReference>
<dbReference type="InterPro" id="IPR027417">
    <property type="entry name" value="P-loop_NTPase"/>
</dbReference>
<dbReference type="InterPro" id="IPR013967">
    <property type="entry name" value="Rad54_N"/>
</dbReference>
<dbReference type="InterPro" id="IPR038718">
    <property type="entry name" value="SNF2-like_sf"/>
</dbReference>
<dbReference type="InterPro" id="IPR049730">
    <property type="entry name" value="SNF2/RAD54-like_C"/>
</dbReference>
<dbReference type="InterPro" id="IPR000330">
    <property type="entry name" value="SNF2_N"/>
</dbReference>
<dbReference type="InterPro" id="IPR050496">
    <property type="entry name" value="SNF2_RAD54_helicase_repair"/>
</dbReference>
<dbReference type="PANTHER" id="PTHR45629:SF7">
    <property type="entry name" value="DNA EXCISION REPAIR PROTEIN ERCC-6-RELATED"/>
    <property type="match status" value="1"/>
</dbReference>
<dbReference type="PANTHER" id="PTHR45629">
    <property type="entry name" value="SNF2/RAD54 FAMILY MEMBER"/>
    <property type="match status" value="1"/>
</dbReference>
<dbReference type="Pfam" id="PF00271">
    <property type="entry name" value="Helicase_C"/>
    <property type="match status" value="1"/>
</dbReference>
<dbReference type="Pfam" id="PF08658">
    <property type="entry name" value="Rad54_N"/>
    <property type="match status" value="1"/>
</dbReference>
<dbReference type="Pfam" id="PF00176">
    <property type="entry name" value="SNF2-rel_dom"/>
    <property type="match status" value="1"/>
</dbReference>
<dbReference type="SMART" id="SM00487">
    <property type="entry name" value="DEXDc"/>
    <property type="match status" value="1"/>
</dbReference>
<dbReference type="SMART" id="SM00490">
    <property type="entry name" value="HELICc"/>
    <property type="match status" value="1"/>
</dbReference>
<dbReference type="SUPFAM" id="SSF52540">
    <property type="entry name" value="P-loop containing nucleoside triphosphate hydrolases"/>
    <property type="match status" value="2"/>
</dbReference>
<dbReference type="PROSITE" id="PS51192">
    <property type="entry name" value="HELICASE_ATP_BIND_1"/>
    <property type="match status" value="1"/>
</dbReference>
<dbReference type="PROSITE" id="PS51194">
    <property type="entry name" value="HELICASE_CTER"/>
    <property type="match status" value="1"/>
</dbReference>
<reference evidence="7" key="1">
    <citation type="journal article" date="2005" name="Genome Res.">
        <title>Comparative genome sequencing of Drosophila pseudoobscura: chromosomal, gene, and cis-element evolution.</title>
        <authorList>
            <person name="Richards S."/>
            <person name="Liu Y."/>
            <person name="Bettencourt B.R."/>
            <person name="Hradecky P."/>
            <person name="Letovsky S."/>
            <person name="Nielsen R."/>
            <person name="Thornton K."/>
            <person name="Hubisz M.J."/>
            <person name="Chen R."/>
            <person name="Meisel R.P."/>
            <person name="Couronne O."/>
            <person name="Hua S."/>
            <person name="Smith M.A."/>
            <person name="Zhang P."/>
            <person name="Liu J."/>
            <person name="Bussemaker H.J."/>
            <person name="van Batenburg M.F."/>
            <person name="Howells S.L."/>
            <person name="Scherer S.E."/>
            <person name="Sodergren E."/>
            <person name="Matthews B.B."/>
            <person name="Crosby M.A."/>
            <person name="Schroeder A.J."/>
            <person name="Ortiz-Barrientos D."/>
            <person name="Rives C.M."/>
            <person name="Metzker M.L."/>
            <person name="Muzny D.M."/>
            <person name="Scott G."/>
            <person name="Steffen D."/>
            <person name="Wheeler D.A."/>
            <person name="Worley K.C."/>
            <person name="Havlak P."/>
            <person name="Durbin K.J."/>
            <person name="Egan A."/>
            <person name="Gill R."/>
            <person name="Hume J."/>
            <person name="Morgan M.B."/>
            <person name="Miner G."/>
            <person name="Hamilton C."/>
            <person name="Huang Y."/>
            <person name="Waldron L."/>
            <person name="Verduzco D."/>
            <person name="Clerc-Blankenburg K.P."/>
            <person name="Dubchak I."/>
            <person name="Noor M.A.F."/>
            <person name="Anderson W."/>
            <person name="White K.P."/>
            <person name="Clark A.G."/>
            <person name="Schaeffer S.W."/>
            <person name="Gelbart W.M."/>
            <person name="Weinstock G.M."/>
            <person name="Gibbs R.A."/>
        </authorList>
    </citation>
    <scope>NUCLEOTIDE SEQUENCE [LARGE SCALE GENOMIC DNA]</scope>
    <source>
        <strain>MV2-25 / Tucson 14011-0121.94</strain>
    </source>
</reference>
<gene>
    <name evidence="2" type="primary">okr</name>
    <name type="ORF">GA17651</name>
</gene>
<feature type="chain" id="PRO_0000392525" description="DNA repair and recombination protein RAD54-like">
    <location>
        <begin position="1"/>
        <end position="782"/>
    </location>
</feature>
<feature type="domain" description="Helicase ATP-binding" evidence="4">
    <location>
        <begin position="168"/>
        <end position="343"/>
    </location>
</feature>
<feature type="domain" description="Helicase C-terminal" evidence="5">
    <location>
        <begin position="501"/>
        <end position="658"/>
    </location>
</feature>
<feature type="region of interest" description="Disordered" evidence="6">
    <location>
        <begin position="1"/>
        <end position="28"/>
    </location>
</feature>
<feature type="region of interest" description="Required for chromatin remodeling, strand pairing activities and coupling of ATPase activity" evidence="2">
    <location>
        <begin position="2"/>
        <end position="9"/>
    </location>
</feature>
<feature type="region of interest" description="Disordered" evidence="6">
    <location>
        <begin position="741"/>
        <end position="782"/>
    </location>
</feature>
<feature type="short sequence motif" description="DEGH box" evidence="3">
    <location>
        <begin position="294"/>
        <end position="297"/>
    </location>
</feature>
<feature type="compositionally biased region" description="Polar residues" evidence="6">
    <location>
        <begin position="1"/>
        <end position="20"/>
    </location>
</feature>
<feature type="compositionally biased region" description="Polar residues" evidence="6">
    <location>
        <begin position="741"/>
        <end position="753"/>
    </location>
</feature>
<feature type="compositionally biased region" description="Acidic residues" evidence="6">
    <location>
        <begin position="773"/>
        <end position="782"/>
    </location>
</feature>
<feature type="binding site" evidence="4">
    <location>
        <begin position="181"/>
        <end position="188"/>
    </location>
    <ligand>
        <name>ATP</name>
        <dbReference type="ChEBI" id="CHEBI:30616"/>
    </ligand>
</feature>
<feature type="modified residue" description="Phosphothreonine" evidence="2">
    <location>
        <position position="22"/>
    </location>
</feature>
<proteinExistence type="inferred from homology"/>
<organism>
    <name type="scientific">Drosophila pseudoobscura pseudoobscura</name>
    <name type="common">Fruit fly</name>
    <dbReference type="NCBI Taxonomy" id="46245"/>
    <lineage>
        <taxon>Eukaryota</taxon>
        <taxon>Metazoa</taxon>
        <taxon>Ecdysozoa</taxon>
        <taxon>Arthropoda</taxon>
        <taxon>Hexapoda</taxon>
        <taxon>Insecta</taxon>
        <taxon>Pterygota</taxon>
        <taxon>Neoptera</taxon>
        <taxon>Endopterygota</taxon>
        <taxon>Diptera</taxon>
        <taxon>Brachycera</taxon>
        <taxon>Muscomorpha</taxon>
        <taxon>Ephydroidea</taxon>
        <taxon>Drosophilidae</taxon>
        <taxon>Drosophila</taxon>
        <taxon>Sophophora</taxon>
    </lineage>
</organism>
<protein>
    <recommendedName>
        <fullName evidence="2">DNA repair and recombination protein RAD54-like</fullName>
        <ecNumber>3.6.4.-</ecNumber>
    </recommendedName>
    <alternativeName>
        <fullName evidence="2">Protein okra</fullName>
    </alternativeName>
</protein>
<keyword id="KW-0067">ATP-binding</keyword>
<keyword id="KW-0131">Cell cycle</keyword>
<keyword id="KW-0132">Cell division</keyword>
<keyword id="KW-0227">DNA damage</keyword>
<keyword id="KW-0234">DNA repair</keyword>
<keyword id="KW-0238">DNA-binding</keyword>
<keyword id="KW-0347">Helicase</keyword>
<keyword id="KW-0378">Hydrolase</keyword>
<keyword id="KW-0469">Meiosis</keyword>
<keyword id="KW-0498">Mitosis</keyword>
<keyword id="KW-0547">Nucleotide-binding</keyword>
<keyword id="KW-0539">Nucleus</keyword>
<keyword id="KW-0597">Phosphoprotein</keyword>
<keyword id="KW-1185">Reference proteome</keyword>
<accession>Q29KH2</accession>
<name>RAD54_DROPS</name>
<comment type="function">
    <text evidence="2">Involved in mitotic DNA repair and meiotic recombination. Functions in the recombinational DNA repair pathway. Essential for interhomolog gene conversion (GC), but may have a less important role in intersister GC than spn-A/Rad51. In the presence of DNA, spn-A/Rad51 enhances the ATPase activity of okr/Rad54 (By similarity).</text>
</comment>
<comment type="subunit">
    <text evidence="1">Interacts (via N-terminus) with spn-A/Rad51.</text>
</comment>
<comment type="subcellular location">
    <subcellularLocation>
        <location evidence="2">Nucleus</location>
    </subcellularLocation>
</comment>
<comment type="similarity">
    <text evidence="3">Belongs to the SNF2/RAD54 helicase family.</text>
</comment>
<evidence type="ECO:0000250" key="1"/>
<evidence type="ECO:0000250" key="2">
    <source>
        <dbReference type="UniProtKB" id="O76460"/>
    </source>
</evidence>
<evidence type="ECO:0000255" key="3"/>
<evidence type="ECO:0000255" key="4">
    <source>
        <dbReference type="PROSITE-ProRule" id="PRU00541"/>
    </source>
</evidence>
<evidence type="ECO:0000255" key="5">
    <source>
        <dbReference type="PROSITE-ProRule" id="PRU00542"/>
    </source>
</evidence>
<evidence type="ECO:0000256" key="6">
    <source>
        <dbReference type="SAM" id="MobiDB-lite"/>
    </source>
</evidence>
<evidence type="ECO:0000312" key="7">
    <source>
        <dbReference type="EMBL" id="EAL33203.2"/>
    </source>
</evidence>